<gene>
    <name evidence="1" type="primary">moaC</name>
    <name type="ordered locus">MTH_809</name>
</gene>
<proteinExistence type="inferred from homology"/>
<dbReference type="EMBL" id="AE000666">
    <property type="protein sequence ID" value="AAB85309.1"/>
    <property type="molecule type" value="Genomic_DNA"/>
</dbReference>
<dbReference type="PIR" id="A69208">
    <property type="entry name" value="A69208"/>
</dbReference>
<dbReference type="SMR" id="O26900"/>
<dbReference type="FunCoup" id="O26900">
    <property type="interactions" value="94"/>
</dbReference>
<dbReference type="STRING" id="187420.MTH_809"/>
<dbReference type="PaxDb" id="187420-MTH_809"/>
<dbReference type="EnsemblBacteria" id="AAB85309">
    <property type="protein sequence ID" value="AAB85309"/>
    <property type="gene ID" value="MTH_809"/>
</dbReference>
<dbReference type="KEGG" id="mth:MTH_809"/>
<dbReference type="PATRIC" id="fig|187420.15.peg.794"/>
<dbReference type="HOGENOM" id="CLU_074693_1_2_2"/>
<dbReference type="InParanoid" id="O26900"/>
<dbReference type="UniPathway" id="UPA00344"/>
<dbReference type="Proteomes" id="UP000005223">
    <property type="component" value="Chromosome"/>
</dbReference>
<dbReference type="GO" id="GO:0061799">
    <property type="term" value="F:cyclic pyranopterin monophosphate synthase activity"/>
    <property type="evidence" value="ECO:0007669"/>
    <property type="project" value="UniProtKB-UniRule"/>
</dbReference>
<dbReference type="GO" id="GO:0061798">
    <property type="term" value="F:GTP 3',8'-cyclase activity"/>
    <property type="evidence" value="ECO:0007669"/>
    <property type="project" value="TreeGrafter"/>
</dbReference>
<dbReference type="GO" id="GO:0006777">
    <property type="term" value="P:Mo-molybdopterin cofactor biosynthetic process"/>
    <property type="evidence" value="ECO:0007669"/>
    <property type="project" value="UniProtKB-UniRule"/>
</dbReference>
<dbReference type="CDD" id="cd01419">
    <property type="entry name" value="MoaC_A"/>
    <property type="match status" value="1"/>
</dbReference>
<dbReference type="Gene3D" id="3.30.70.640">
    <property type="entry name" value="Molybdopterin cofactor biosynthesis C (MoaC) domain"/>
    <property type="match status" value="1"/>
</dbReference>
<dbReference type="HAMAP" id="MF_01224_A">
    <property type="entry name" value="MoaC_A"/>
    <property type="match status" value="1"/>
</dbReference>
<dbReference type="InterPro" id="IPR023047">
    <property type="entry name" value="Mo_CF_biosynth-C_arc"/>
</dbReference>
<dbReference type="InterPro" id="IPR023045">
    <property type="entry name" value="MoaC"/>
</dbReference>
<dbReference type="InterPro" id="IPR036522">
    <property type="entry name" value="MoaC_sf"/>
</dbReference>
<dbReference type="InterPro" id="IPR050105">
    <property type="entry name" value="MoCo_biosynth_MoaA/MoaC"/>
</dbReference>
<dbReference type="InterPro" id="IPR002820">
    <property type="entry name" value="Mopterin_CF_biosynth-C_dom"/>
</dbReference>
<dbReference type="NCBIfam" id="TIGR00581">
    <property type="entry name" value="moaC"/>
    <property type="match status" value="1"/>
</dbReference>
<dbReference type="NCBIfam" id="NF006870">
    <property type="entry name" value="PRK09364.1"/>
    <property type="match status" value="1"/>
</dbReference>
<dbReference type="NCBIfam" id="NF008999">
    <property type="entry name" value="PRK12343.1"/>
    <property type="match status" value="1"/>
</dbReference>
<dbReference type="PANTHER" id="PTHR22960:SF0">
    <property type="entry name" value="MOLYBDENUM COFACTOR BIOSYNTHESIS PROTEIN 1"/>
    <property type="match status" value="1"/>
</dbReference>
<dbReference type="PANTHER" id="PTHR22960">
    <property type="entry name" value="MOLYBDOPTERIN COFACTOR SYNTHESIS PROTEIN A"/>
    <property type="match status" value="1"/>
</dbReference>
<dbReference type="Pfam" id="PF01967">
    <property type="entry name" value="MoaC"/>
    <property type="match status" value="1"/>
</dbReference>
<dbReference type="SUPFAM" id="SSF55040">
    <property type="entry name" value="Molybdenum cofactor biosynthesis protein C, MoaC"/>
    <property type="match status" value="1"/>
</dbReference>
<organism>
    <name type="scientific">Methanothermobacter thermautotrophicus (strain ATCC 29096 / DSM 1053 / JCM 10044 / NBRC 100330 / Delta H)</name>
    <name type="common">Methanobacterium thermoautotrophicum</name>
    <dbReference type="NCBI Taxonomy" id="187420"/>
    <lineage>
        <taxon>Archaea</taxon>
        <taxon>Methanobacteriati</taxon>
        <taxon>Methanobacteriota</taxon>
        <taxon>Methanomada group</taxon>
        <taxon>Methanobacteria</taxon>
        <taxon>Methanobacteriales</taxon>
        <taxon>Methanobacteriaceae</taxon>
        <taxon>Methanothermobacter</taxon>
    </lineage>
</organism>
<comment type="function">
    <text evidence="1">Together with MoaA, is involved in the conversion of 5'-GTP to cyclic pyranopterin monophosphate (cPMP or molybdopterin precursor Z).</text>
</comment>
<comment type="pathway">
    <text evidence="1">Cofactor biosynthesis; molybdopterin biosynthesis.</text>
</comment>
<comment type="similarity">
    <text evidence="1">Belongs to the MoaC family.</text>
</comment>
<reference key="1">
    <citation type="journal article" date="1997" name="J. Bacteriol.">
        <title>Complete genome sequence of Methanobacterium thermoautotrophicum deltaH: functional analysis and comparative genomics.</title>
        <authorList>
            <person name="Smith D.R."/>
            <person name="Doucette-Stamm L.A."/>
            <person name="Deloughery C."/>
            <person name="Lee H.-M."/>
            <person name="Dubois J."/>
            <person name="Aldredge T."/>
            <person name="Bashirzadeh R."/>
            <person name="Blakely D."/>
            <person name="Cook R."/>
            <person name="Gilbert K."/>
            <person name="Harrison D."/>
            <person name="Hoang L."/>
            <person name="Keagle P."/>
            <person name="Lumm W."/>
            <person name="Pothier B."/>
            <person name="Qiu D."/>
            <person name="Spadafora R."/>
            <person name="Vicare R."/>
            <person name="Wang Y."/>
            <person name="Wierzbowski J."/>
            <person name="Gibson R."/>
            <person name="Jiwani N."/>
            <person name="Caruso A."/>
            <person name="Bush D."/>
            <person name="Safer H."/>
            <person name="Patwell D."/>
            <person name="Prabhakar S."/>
            <person name="McDougall S."/>
            <person name="Shimer G."/>
            <person name="Goyal A."/>
            <person name="Pietrovski S."/>
            <person name="Church G.M."/>
            <person name="Daniels C.J."/>
            <person name="Mao J.-I."/>
            <person name="Rice P."/>
            <person name="Noelling J."/>
            <person name="Reeve J.N."/>
        </authorList>
    </citation>
    <scope>NUCLEOTIDE SEQUENCE [LARGE SCALE GENOMIC DNA]</scope>
    <source>
        <strain>ATCC 29096 / DSM 1053 / JCM 10044 / NBRC 100330 / Delta H</strain>
    </source>
</reference>
<feature type="chain" id="PRO_0000097857" description="Probable cyclic pyranopterin monophosphate synthase accessory protein">
    <location>
        <begin position="1"/>
        <end position="159"/>
    </location>
</feature>
<feature type="active site" evidence="1">
    <location>
        <position position="128"/>
    </location>
</feature>
<sequence>MMIMKEFTHTDEKGVRMVDVGSKPVVRRTATAEGHILLREDTINLIREKKIEKGNVLATAQIAAIVAVKRTWEIIPLCHPLPLTGVDVEFDLDDDRITARVTVRCDGKTGVEMEAVTGVSVALLTIWDMVKSVEKDDDGQYPETAISNIRVIKKEKLEL</sequence>
<name>MOAC_METTH</name>
<keyword id="KW-0501">Molybdenum cofactor biosynthesis</keyword>
<keyword id="KW-1185">Reference proteome</keyword>
<evidence type="ECO:0000255" key="1">
    <source>
        <dbReference type="HAMAP-Rule" id="MF_01224"/>
    </source>
</evidence>
<protein>
    <recommendedName>
        <fullName evidence="1">Probable cyclic pyranopterin monophosphate synthase accessory protein</fullName>
    </recommendedName>
    <alternativeName>
        <fullName evidence="1">Molybdenum cofactor biosynthesis protein C</fullName>
    </alternativeName>
</protein>
<accession>O26900</accession>